<accession>Q8WVX3</accession>
<accession>Q6J203</accession>
<feature type="chain" id="PRO_0000325784" description="Sarcoplasmic/endoplasmic reticulum calcium ATPase regulator ARLN">
    <location>
        <begin position="1"/>
        <end position="66"/>
    </location>
</feature>
<feature type="transmembrane region" description="Helical" evidence="2">
    <location>
        <begin position="45"/>
        <end position="65"/>
    </location>
</feature>
<feature type="region of interest" description="Disordered" evidence="3">
    <location>
        <begin position="1"/>
        <end position="37"/>
    </location>
</feature>
<feature type="compositionally biased region" description="Basic and acidic residues" evidence="3">
    <location>
        <begin position="9"/>
        <end position="20"/>
    </location>
</feature>
<feature type="modified residue" description="N-acetylmethionine" evidence="9">
    <location>
        <position position="1"/>
    </location>
</feature>
<feature type="splice variant" id="VSP_032405" description="In isoform 2." evidence="6">
    <original>M</original>
    <variation>MTSLINSPINRRPLQNVEGNNRCQRKAKNYGNKYFIHCLDLEKITLSPRRKHDIEGGDKLNVKFSQLRSRRQRKAEPGACALGRVGSECIPEPGARRTAQAAGLRSVSGAANTKVRELKHFRFLGLLRSCRSEM</variation>
    <location>
        <position position="1"/>
    </location>
</feature>
<feature type="sequence variant" id="VAR_039911" description="In dbSNP:rs17851522." evidence="4">
    <original>R</original>
    <variation>Q</variation>
    <location>
        <position position="17"/>
    </location>
</feature>
<feature type="sequence variant" id="VAR_039912" description="In dbSNP:rs11544530.">
    <original>P</original>
    <variation>H</variation>
    <location>
        <position position="32"/>
    </location>
</feature>
<sequence length="66" mass="7604">MEVDAPGVDGRDGLRERRGFSEGGRQNFDVRPQSGANGLPKHSYWLDLWLFILFDVVVFLFVYFLP</sequence>
<reference key="1">
    <citation type="journal article" date="2005" name="Zhonghua Gan Zang Bing Za Zhi">
        <title>Screening and cloning target genes transactivated by hepatitis C virus F protein using suppression subtractive hybridization technique.</title>
        <authorList>
            <person name="Guo J."/>
            <person name="Cheng J."/>
            <person name="Ji D."/>
            <person name="Zhao L.F."/>
            <person name="Gao X.S."/>
            <person name="Liu Y."/>
            <person name="Wu S.H."/>
        </authorList>
    </citation>
    <scope>NUCLEOTIDE SEQUENCE [MRNA] (ISOFORM 2)</scope>
</reference>
<reference key="2">
    <citation type="journal article" date="2005" name="Nature">
        <title>Generation and annotation of the DNA sequences of human chromosomes 2 and 4.</title>
        <authorList>
            <person name="Hillier L.W."/>
            <person name="Graves T.A."/>
            <person name="Fulton R.S."/>
            <person name="Fulton L.A."/>
            <person name="Pepin K.H."/>
            <person name="Minx P."/>
            <person name="Wagner-McPherson C."/>
            <person name="Layman D."/>
            <person name="Wylie K."/>
            <person name="Sekhon M."/>
            <person name="Becker M.C."/>
            <person name="Fewell G.A."/>
            <person name="Delehaunty K.D."/>
            <person name="Miner T.L."/>
            <person name="Nash W.E."/>
            <person name="Kremitzki C."/>
            <person name="Oddy L."/>
            <person name="Du H."/>
            <person name="Sun H."/>
            <person name="Bradshaw-Cordum H."/>
            <person name="Ali J."/>
            <person name="Carter J."/>
            <person name="Cordes M."/>
            <person name="Harris A."/>
            <person name="Isak A."/>
            <person name="van Brunt A."/>
            <person name="Nguyen C."/>
            <person name="Du F."/>
            <person name="Courtney L."/>
            <person name="Kalicki J."/>
            <person name="Ozersky P."/>
            <person name="Abbott S."/>
            <person name="Armstrong J."/>
            <person name="Belter E.A."/>
            <person name="Caruso L."/>
            <person name="Cedroni M."/>
            <person name="Cotton M."/>
            <person name="Davidson T."/>
            <person name="Desai A."/>
            <person name="Elliott G."/>
            <person name="Erb T."/>
            <person name="Fronick C."/>
            <person name="Gaige T."/>
            <person name="Haakenson W."/>
            <person name="Haglund K."/>
            <person name="Holmes A."/>
            <person name="Harkins R."/>
            <person name="Kim K."/>
            <person name="Kruchowski S.S."/>
            <person name="Strong C.M."/>
            <person name="Grewal N."/>
            <person name="Goyea E."/>
            <person name="Hou S."/>
            <person name="Levy A."/>
            <person name="Martinka S."/>
            <person name="Mead K."/>
            <person name="McLellan M.D."/>
            <person name="Meyer R."/>
            <person name="Randall-Maher J."/>
            <person name="Tomlinson C."/>
            <person name="Dauphin-Kohlberg S."/>
            <person name="Kozlowicz-Reilly A."/>
            <person name="Shah N."/>
            <person name="Swearengen-Shahid S."/>
            <person name="Snider J."/>
            <person name="Strong J.T."/>
            <person name="Thompson J."/>
            <person name="Yoakum M."/>
            <person name="Leonard S."/>
            <person name="Pearman C."/>
            <person name="Trani L."/>
            <person name="Radionenko M."/>
            <person name="Waligorski J.E."/>
            <person name="Wang C."/>
            <person name="Rock S.M."/>
            <person name="Tin-Wollam A.-M."/>
            <person name="Maupin R."/>
            <person name="Latreille P."/>
            <person name="Wendl M.C."/>
            <person name="Yang S.-P."/>
            <person name="Pohl C."/>
            <person name="Wallis J.W."/>
            <person name="Spieth J."/>
            <person name="Bieri T.A."/>
            <person name="Berkowicz N."/>
            <person name="Nelson J.O."/>
            <person name="Osborne J."/>
            <person name="Ding L."/>
            <person name="Meyer R."/>
            <person name="Sabo A."/>
            <person name="Shotland Y."/>
            <person name="Sinha P."/>
            <person name="Wohldmann P.E."/>
            <person name="Cook L.L."/>
            <person name="Hickenbotham M.T."/>
            <person name="Eldred J."/>
            <person name="Williams D."/>
            <person name="Jones T.A."/>
            <person name="She X."/>
            <person name="Ciccarelli F.D."/>
            <person name="Izaurralde E."/>
            <person name="Taylor J."/>
            <person name="Schmutz J."/>
            <person name="Myers R.M."/>
            <person name="Cox D.R."/>
            <person name="Huang X."/>
            <person name="McPherson J.D."/>
            <person name="Mardis E.R."/>
            <person name="Clifton S.W."/>
            <person name="Warren W.C."/>
            <person name="Chinwalla A.T."/>
            <person name="Eddy S.R."/>
            <person name="Marra M.A."/>
            <person name="Ovcharenko I."/>
            <person name="Furey T.S."/>
            <person name="Miller W."/>
            <person name="Eichler E.E."/>
            <person name="Bork P."/>
            <person name="Suyama M."/>
            <person name="Torrents D."/>
            <person name="Waterston R.H."/>
            <person name="Wilson R.K."/>
        </authorList>
    </citation>
    <scope>NUCLEOTIDE SEQUENCE [LARGE SCALE GENOMIC DNA]</scope>
</reference>
<reference key="3">
    <citation type="journal article" date="2004" name="Genome Res.">
        <title>The status, quality, and expansion of the NIH full-length cDNA project: the Mammalian Gene Collection (MGC).</title>
        <authorList>
            <consortium name="The MGC Project Team"/>
        </authorList>
    </citation>
    <scope>NUCLEOTIDE SEQUENCE [LARGE SCALE MRNA] (ISOFORM 1)</scope>
    <scope>VARIANT GLN-17</scope>
    <source>
        <tissue>Bone marrow</tissue>
    </source>
</reference>
<reference key="4">
    <citation type="journal article" date="2012" name="Proc. Natl. Acad. Sci. U.S.A.">
        <title>N-terminal acetylome analyses and functional insights of the N-terminal acetyltransferase NatB.</title>
        <authorList>
            <person name="Van Damme P."/>
            <person name="Lasa M."/>
            <person name="Polevoda B."/>
            <person name="Gazquez C."/>
            <person name="Elosegui-Artola A."/>
            <person name="Kim D.S."/>
            <person name="De Juan-Pardo E."/>
            <person name="Demeyer K."/>
            <person name="Hole K."/>
            <person name="Larrea E."/>
            <person name="Timmerman E."/>
            <person name="Prieto J."/>
            <person name="Arnesen T."/>
            <person name="Sherman F."/>
            <person name="Gevaert K."/>
            <person name="Aldabe R."/>
        </authorList>
    </citation>
    <scope>ACETYLATION [LARGE SCALE ANALYSIS] AT MET-1</scope>
    <scope>IDENTIFICATION BY MASS SPECTROMETRY [LARGE SCALE ANALYSIS]</scope>
</reference>
<reference key="5">
    <citation type="journal article" date="2023" name="Biophys. J.">
        <title>Micropeptide hetero-oligomerization adds complexity to the calcium pump regulatory network.</title>
        <authorList>
            <person name="Phillips T.A."/>
            <person name="Hauck G.T."/>
            <person name="Pribadi M.P."/>
            <person name="Cho E.E."/>
            <person name="Cleary S.R."/>
            <person name="Robia S.L."/>
        </authorList>
    </citation>
    <scope>SUBUNIT</scope>
</reference>
<organism>
    <name type="scientific">Homo sapiens</name>
    <name type="common">Human</name>
    <dbReference type="NCBI Taxonomy" id="9606"/>
    <lineage>
        <taxon>Eukaryota</taxon>
        <taxon>Metazoa</taxon>
        <taxon>Chordata</taxon>
        <taxon>Craniata</taxon>
        <taxon>Vertebrata</taxon>
        <taxon>Euteleostomi</taxon>
        <taxon>Mammalia</taxon>
        <taxon>Eutheria</taxon>
        <taxon>Euarchontoglires</taxon>
        <taxon>Primates</taxon>
        <taxon>Haplorrhini</taxon>
        <taxon>Catarrhini</taxon>
        <taxon>Hominidae</taxon>
        <taxon>Homo</taxon>
    </lineage>
</organism>
<proteinExistence type="evidence at protein level"/>
<keyword id="KW-0007">Acetylation</keyword>
<keyword id="KW-0025">Alternative splicing</keyword>
<keyword id="KW-0256">Endoplasmic reticulum</keyword>
<keyword id="KW-0472">Membrane</keyword>
<keyword id="KW-1267">Proteomics identification</keyword>
<keyword id="KW-1185">Reference proteome</keyword>
<keyword id="KW-0812">Transmembrane</keyword>
<keyword id="KW-1133">Transmembrane helix</keyword>
<comment type="function">
    <text evidence="1">Inhibits the activity of the calcium ATPases ATP2A2/SERCA2 and ATP2A3/SERCA3 by decreasing their apparent affinity for Ca(2+).</text>
</comment>
<comment type="subunit">
    <text evidence="1 5">Homooligomer (PubMed:36523160). Can also form heterooligomers with other sarcoplasmic/endoplasmic reticulum calcium ATPase (SERCA) regulators ERLN, PLN, SLN and STRIT1/DWORF (PubMed:36523160). Monomer (By similarity). Interacts as a monomer with ATP2A2/SERCA2; the interaction results in inhibition of ATP2A2 Ca(2+) affinity (By similarity).</text>
</comment>
<comment type="interaction">
    <interactant intactId="EBI-12003442">
        <id>Q8WVX3-2</id>
    </interactant>
    <interactant intactId="EBI-17979264">
        <id>Q86Y34</id>
        <label>ADGRG3</label>
    </interactant>
    <organismsDiffer>false</organismsDiffer>
    <experiments>3</experiments>
</comment>
<comment type="interaction">
    <interactant intactId="EBI-12003442">
        <id>Q8WVX3-2</id>
    </interactant>
    <interactant intactId="EBI-13059134">
        <id>Q13520</id>
        <label>AQP6</label>
    </interactant>
    <organismsDiffer>false</organismsDiffer>
    <experiments>3</experiments>
</comment>
<comment type="interaction">
    <interactant intactId="EBI-12003442">
        <id>Q8WVX3-2</id>
    </interactant>
    <interactant intactId="EBI-11343438">
        <id>Q3SXY8</id>
        <label>ARL13B</label>
    </interactant>
    <organismsDiffer>false</organismsDiffer>
    <experiments>3</experiments>
</comment>
<comment type="interaction">
    <interactant intactId="EBI-12003442">
        <id>Q8WVX3-2</id>
    </interactant>
    <interactant intactId="EBI-747430">
        <id>Q9BXK5</id>
        <label>BCL2L13</label>
    </interactant>
    <organismsDiffer>false</organismsDiffer>
    <experiments>5</experiments>
</comment>
<comment type="interaction">
    <interactant intactId="EBI-12003442">
        <id>Q8WVX3-2</id>
    </interactant>
    <interactant intactId="EBI-700794">
        <id>Q13323</id>
        <label>BIK</label>
    </interactant>
    <organismsDiffer>false</organismsDiffer>
    <experiments>3</experiments>
</comment>
<comment type="interaction">
    <interactant intactId="EBI-12003442">
        <id>Q8WVX3-2</id>
    </interactant>
    <interactant intactId="EBI-12874086">
        <id>O00421-2</id>
        <label>CCRL2</label>
    </interactant>
    <organismsDiffer>false</organismsDiffer>
    <experiments>3</experiments>
</comment>
<comment type="interaction">
    <interactant intactId="EBI-12003442">
        <id>Q8WVX3-2</id>
    </interactant>
    <interactant intactId="EBI-7797864">
        <id>P11912</id>
        <label>CD79A</label>
    </interactant>
    <organismsDiffer>false</organismsDiffer>
    <experiments>3</experiments>
</comment>
<comment type="interaction">
    <interactant intactId="EBI-12003442">
        <id>Q8WVX3-2</id>
    </interactant>
    <interactant intactId="EBI-1045797">
        <id>Q8N5K1</id>
        <label>CISD2</label>
    </interactant>
    <organismsDiffer>false</organismsDiffer>
    <experiments>3</experiments>
</comment>
<comment type="interaction">
    <interactant intactId="EBI-12003442">
        <id>Q8WVX3-2</id>
    </interactant>
    <interactant intactId="EBI-18341636">
        <id>O95484</id>
        <label>CLDN9</label>
    </interactant>
    <organismsDiffer>false</organismsDiffer>
    <experiments>3</experiments>
</comment>
<comment type="interaction">
    <interactant intactId="EBI-12003442">
        <id>Q8WVX3-2</id>
    </interactant>
    <interactant intactId="EBI-6942903">
        <id>Q96BA8</id>
        <label>CREB3L1</label>
    </interactant>
    <organismsDiffer>false</organismsDiffer>
    <experiments>3</experiments>
</comment>
<comment type="interaction">
    <interactant intactId="EBI-12003442">
        <id>Q8WVX3-2</id>
    </interactant>
    <interactant intactId="EBI-2835281">
        <id>P25025</id>
        <label>CXCR2</label>
    </interactant>
    <organismsDiffer>false</organismsDiffer>
    <experiments>3</experiments>
</comment>
<comment type="interaction">
    <interactant intactId="EBI-12003442">
        <id>Q8WVX3-2</id>
    </interactant>
    <interactant intactId="EBI-2680384">
        <id>Q9BQA9</id>
        <label>CYBC1</label>
    </interactant>
    <organismsDiffer>false</organismsDiffer>
    <experiments>3</experiments>
</comment>
<comment type="interaction">
    <interactant intactId="EBI-12003442">
        <id>Q8WVX3-2</id>
    </interactant>
    <interactant intactId="EBI-1052713">
        <id>O15121</id>
        <label>DEGS1</label>
    </interactant>
    <organismsDiffer>false</organismsDiffer>
    <experiments>3</experiments>
</comment>
<comment type="interaction">
    <interactant intactId="EBI-12003442">
        <id>Q8WVX3-2</id>
    </interactant>
    <interactant intactId="EBI-3915253">
        <id>Q15125</id>
        <label>EBP</label>
    </interactant>
    <organismsDiffer>false</organismsDiffer>
    <experiments>3</experiments>
</comment>
<comment type="interaction">
    <interactant intactId="EBI-12003442">
        <id>Q8WVX3-2</id>
    </interactant>
    <interactant intactId="EBI-781551">
        <id>Q9Y282</id>
        <label>ERGIC3</label>
    </interactant>
    <organismsDiffer>false</organismsDiffer>
    <experiments>3</experiments>
</comment>
<comment type="interaction">
    <interactant intactId="EBI-12003442">
        <id>Q8WVX3-2</id>
    </interactant>
    <interactant intactId="EBI-18636064">
        <id>Q8TBP5</id>
        <label>FAM174A</label>
    </interactant>
    <organismsDiffer>false</organismsDiffer>
    <experiments>3</experiments>
</comment>
<comment type="interaction">
    <interactant intactId="EBI-12003442">
        <id>Q8WVX3-2</id>
    </interactant>
    <interactant intactId="EBI-18304435">
        <id>Q5JX71</id>
        <label>FAM209A</label>
    </interactant>
    <organismsDiffer>false</organismsDiffer>
    <experiments>3</experiments>
</comment>
<comment type="interaction">
    <interactant intactId="EBI-12003442">
        <id>Q8WVX3-2</id>
    </interactant>
    <interactant intactId="EBI-2833872">
        <id>O15552</id>
        <label>FFAR2</label>
    </interactant>
    <organismsDiffer>false</organismsDiffer>
    <experiments>3</experiments>
</comment>
<comment type="interaction">
    <interactant intactId="EBI-12003442">
        <id>Q8WVX3-2</id>
    </interactant>
    <interactant intactId="EBI-750433">
        <id>P36382</id>
        <label>GJA5</label>
    </interactant>
    <organismsDiffer>false</organismsDiffer>
    <experiments>3</experiments>
</comment>
<comment type="interaction">
    <interactant intactId="EBI-12003442">
        <id>Q8WVX3-2</id>
    </interactant>
    <interactant intactId="EBI-12831526">
        <id>Q9NTQ9</id>
        <label>GJB4</label>
    </interactant>
    <organismsDiffer>false</organismsDiffer>
    <experiments>3</experiments>
</comment>
<comment type="interaction">
    <interactant intactId="EBI-12003442">
        <id>Q8WVX3-2</id>
    </interactant>
    <interactant intactId="EBI-3909454">
        <id>O95377</id>
        <label>GJB5</label>
    </interactant>
    <organismsDiffer>false</organismsDiffer>
    <experiments>3</experiments>
</comment>
<comment type="interaction">
    <interactant intactId="EBI-12003442">
        <id>Q8WVX3-2</id>
    </interactant>
    <interactant intactId="EBI-12808020">
        <id>Q9BZJ8</id>
        <label>GPR61</label>
    </interactant>
    <organismsDiffer>false</organismsDiffer>
    <experiments>3</experiments>
</comment>
<comment type="interaction">
    <interactant intactId="EBI-12003442">
        <id>Q8WVX3-2</id>
    </interactant>
    <interactant intactId="EBI-5916693">
        <id>Q9HCP6</id>
        <label>HHATL</label>
    </interactant>
    <organismsDiffer>false</organismsDiffer>
    <experiments>3</experiments>
</comment>
<comment type="interaction">
    <interactant intactId="EBI-12003442">
        <id>Q8WVX3-2</id>
    </interactant>
    <interactant intactId="EBI-10266796">
        <id>Q8N5M9</id>
        <label>JAGN1</label>
    </interactant>
    <organismsDiffer>false</organismsDiffer>
    <experiments>3</experiments>
</comment>
<comment type="interaction">
    <interactant intactId="EBI-12003442">
        <id>Q8WVX3-2</id>
    </interactant>
    <interactant intactId="EBI-2865663">
        <id>Q13571</id>
        <label>LAPTM5</label>
    </interactant>
    <organismsDiffer>false</organismsDiffer>
    <experiments>3</experiments>
</comment>
<comment type="interaction">
    <interactant intactId="EBI-12003442">
        <id>Q8WVX3-2</id>
    </interactant>
    <interactant intactId="EBI-9088345">
        <id>O95867</id>
        <label>LY6G6C</label>
    </interactant>
    <organismsDiffer>false</organismsDiffer>
    <experiments>3</experiments>
</comment>
<comment type="interaction">
    <interactant intactId="EBI-12003442">
        <id>Q8WVX3-2</id>
    </interactant>
    <interactant intactId="EBI-373355">
        <id>Q5SR56</id>
        <label>MFSD14B</label>
    </interactant>
    <organismsDiffer>false</organismsDiffer>
    <experiments>3</experiments>
</comment>
<comment type="interaction">
    <interactant intactId="EBI-12003442">
        <id>Q8WVX3-2</id>
    </interactant>
    <interactant intactId="EBI-18391669">
        <id>Q7Z6M3</id>
        <label>MILR1</label>
    </interactant>
    <organismsDiffer>false</organismsDiffer>
    <experiments>3</experiments>
</comment>
<comment type="interaction">
    <interactant intactId="EBI-12003442">
        <id>Q8WVX3-2</id>
    </interactant>
    <interactant intactId="EBI-17873222">
        <id>Q15546</id>
        <label>MMD</label>
    </interactant>
    <organismsDiffer>false</organismsDiffer>
    <experiments>3</experiments>
</comment>
<comment type="interaction">
    <interactant intactId="EBI-12003442">
        <id>Q8WVX3-2</id>
    </interactant>
    <interactant intactId="EBI-6163737">
        <id>Q8N4V1</id>
        <label>MMGT1</label>
    </interactant>
    <organismsDiffer>false</organismsDiffer>
    <experiments>3</experiments>
</comment>
<comment type="interaction">
    <interactant intactId="EBI-12003442">
        <id>Q8WVX3-2</id>
    </interactant>
    <interactant intactId="EBI-1045440">
        <id>Q9HC36</id>
        <label>MRM3</label>
    </interactant>
    <organismsDiffer>false</organismsDiffer>
    <experiments>3</experiments>
</comment>
<comment type="interaction">
    <interactant intactId="EBI-12003442">
        <id>Q8WVX3-2</id>
    </interactant>
    <interactant intactId="EBI-12806656">
        <id>Q96HJ5</id>
        <label>MS4A3</label>
    </interactant>
    <organismsDiffer>false</organismsDiffer>
    <experiments>3</experiments>
</comment>
<comment type="interaction">
    <interactant intactId="EBI-12003442">
        <id>Q8WVX3-2</id>
    </interactant>
    <interactant intactId="EBI-10247000">
        <id>Q6IBW4-4</id>
        <label>NCAPH2</label>
    </interactant>
    <organismsDiffer>false</organismsDiffer>
    <experiments>3</experiments>
</comment>
<comment type="interaction">
    <interactant intactId="EBI-12003442">
        <id>Q8WVX3-2</id>
    </interactant>
    <interactant intactId="EBI-949945">
        <id>Q53GL0</id>
        <label>PLEKHO1</label>
    </interactant>
    <organismsDiffer>false</organismsDiffer>
    <experiments>3</experiments>
</comment>
<comment type="interaction">
    <interactant intactId="EBI-12003442">
        <id>Q8WVX3-2</id>
    </interactant>
    <interactant intactId="EBI-11161398">
        <id>O14684</id>
        <label>PTGES</label>
    </interactant>
    <organismsDiffer>false</organismsDiffer>
    <experiments>3</experiments>
</comment>
<comment type="interaction">
    <interactant intactId="EBI-12003442">
        <id>Q8WVX3-2</id>
    </interactant>
    <interactant intactId="EBI-7545592">
        <id>Q9H6H4</id>
        <label>REEP4</label>
    </interactant>
    <organismsDiffer>false</organismsDiffer>
    <experiments>3</experiments>
</comment>
<comment type="interaction">
    <interactant intactId="EBI-12003442">
        <id>Q8WVX3-2</id>
    </interactant>
    <interactant intactId="EBI-10192441">
        <id>Q86VR2</id>
        <label>RETREG3</label>
    </interactant>
    <organismsDiffer>false</organismsDiffer>
    <experiments>3</experiments>
</comment>
<comment type="interaction">
    <interactant intactId="EBI-12003442">
        <id>Q8WVX3-2</id>
    </interactant>
    <interactant intactId="EBI-12104986">
        <id>O75783</id>
        <label>RHBDL1</label>
    </interactant>
    <organismsDiffer>false</organismsDiffer>
    <experiments>3</experiments>
</comment>
<comment type="interaction">
    <interactant intactId="EBI-12003442">
        <id>Q8WVX3-2</id>
    </interactant>
    <interactant intactId="EBI-15853497">
        <id>Q9UBD6</id>
        <label>RHCG</label>
    </interactant>
    <organismsDiffer>false</organismsDiffer>
    <experiments>3</experiments>
</comment>
<comment type="interaction">
    <interactant intactId="EBI-12003442">
        <id>Q8WVX3-2</id>
    </interactant>
    <interactant intactId="EBI-18037857">
        <id>Q3SXP7</id>
        <label>SHISAL1</label>
    </interactant>
    <organismsDiffer>false</organismsDiffer>
    <experiments>3</experiments>
</comment>
<comment type="interaction">
    <interactant intactId="EBI-12003442">
        <id>Q8WVX3-2</id>
    </interactant>
    <interactant intactId="EBI-1573290">
        <id>Q15849</id>
        <label>SLC14A2</label>
    </interactant>
    <organismsDiffer>false</organismsDiffer>
    <experiments>3</experiments>
</comment>
<comment type="interaction">
    <interactant intactId="EBI-12003442">
        <id>Q8WVX3-2</id>
    </interactant>
    <interactant intactId="EBI-3923779">
        <id>Q9BZV2</id>
        <label>SLC19A3</label>
    </interactant>
    <organismsDiffer>false</organismsDiffer>
    <experiments>3</experiments>
</comment>
<comment type="interaction">
    <interactant intactId="EBI-12003442">
        <id>Q8WVX3-2</id>
    </interactant>
    <interactant intactId="EBI-17295964">
        <id>Q9NQQ7-3</id>
        <label>SLC35C2</label>
    </interactant>
    <organismsDiffer>false</organismsDiffer>
    <experiments>3</experiments>
</comment>
<comment type="interaction">
    <interactant intactId="EBI-12003442">
        <id>Q8WVX3-2</id>
    </interactant>
    <interactant intactId="EBI-13389236">
        <id>Q7Z769</id>
        <label>SLC35E3</label>
    </interactant>
    <organismsDiffer>false</organismsDiffer>
    <experiments>3</experiments>
</comment>
<comment type="interaction">
    <interactant intactId="EBI-12003442">
        <id>Q8WVX3-2</id>
    </interactant>
    <interactant intactId="EBI-12898013">
        <id>Q9NP94</id>
        <label>SLC39A2</label>
    </interactant>
    <organismsDiffer>false</organismsDiffer>
    <experiments>3</experiments>
</comment>
<comment type="interaction">
    <interactant intactId="EBI-12003442">
        <id>Q8WVX3-2</id>
    </interactant>
    <interactant intactId="EBI-7225508">
        <id>Q96GZ6</id>
        <label>SLC41A3</label>
    </interactant>
    <organismsDiffer>false</organismsDiffer>
    <experiments>3</experiments>
</comment>
<comment type="interaction">
    <interactant intactId="EBI-12003442">
        <id>Q8WVX3-2</id>
    </interactant>
    <interactant intactId="EBI-13041931">
        <id>Q9UIG8-2</id>
        <label>SLCO3A1</label>
    </interactant>
    <organismsDiffer>false</organismsDiffer>
    <experiments>3</experiments>
</comment>
<comment type="interaction">
    <interactant intactId="EBI-12003442">
        <id>Q8WVX3-2</id>
    </interactant>
    <interactant intactId="EBI-17280858">
        <id>Q8WWF3</id>
        <label>SSMEM1</label>
    </interactant>
    <organismsDiffer>false</organismsDiffer>
    <experiments>3</experiments>
</comment>
<comment type="interaction">
    <interactant intactId="EBI-12003442">
        <id>Q8WVX3-2</id>
    </interactant>
    <interactant intactId="EBI-712466">
        <id>Q16623</id>
        <label>STX1A</label>
    </interactant>
    <organismsDiffer>false</organismsDiffer>
    <experiments>3</experiments>
</comment>
<comment type="interaction">
    <interactant intactId="EBI-12003442">
        <id>Q8WVX3-2</id>
    </interactant>
    <interactant intactId="EBI-10273251">
        <id>Q8TBG9</id>
        <label>SYNPR</label>
    </interactant>
    <organismsDiffer>false</organismsDiffer>
    <experiments>3</experiments>
</comment>
<comment type="interaction">
    <interactant intactId="EBI-12003442">
        <id>Q8WVX3-2</id>
    </interactant>
    <interactant intactId="EBI-6268651">
        <id>Q9NPL8</id>
        <label>TIMMDC1</label>
    </interactant>
    <organismsDiffer>false</organismsDiffer>
    <experiments>3</experiments>
</comment>
<comment type="interaction">
    <interactant intactId="EBI-12003442">
        <id>Q8WVX3-2</id>
    </interactant>
    <interactant intactId="EBI-6448756">
        <id>Q96DZ7</id>
        <label>TM4SF19</label>
    </interactant>
    <organismsDiffer>false</organismsDiffer>
    <experiments>3</experiments>
</comment>
<comment type="interaction">
    <interactant intactId="EBI-12003442">
        <id>Q8WVX3-2</id>
    </interactant>
    <interactant intactId="EBI-3922699">
        <id>Q96IK0</id>
        <label>TMEM101</label>
    </interactant>
    <organismsDiffer>false</organismsDiffer>
    <experiments>3</experiments>
</comment>
<comment type="interaction">
    <interactant intactId="EBI-12003442">
        <id>Q8WVX3-2</id>
    </interactant>
    <interactant intactId="EBI-10982110">
        <id>Q96Q45-2</id>
        <label>TMEM237</label>
    </interactant>
    <organismsDiffer>false</organismsDiffer>
    <experiments>3</experiments>
</comment>
<comment type="interaction">
    <interactant intactId="EBI-12003442">
        <id>Q8WVX3-2</id>
    </interactant>
    <interactant intactId="EBI-10314986">
        <id>Q9NWD8</id>
        <label>TMEM248</label>
    </interactant>
    <organismsDiffer>false</organismsDiffer>
    <experiments>3</experiments>
</comment>
<comment type="interaction">
    <interactant intactId="EBI-12003442">
        <id>Q8WVX3-2</id>
    </interactant>
    <interactant intactId="EBI-10823938">
        <id>Q9NWC5</id>
        <label>TMEM45A</label>
    </interactant>
    <organismsDiffer>false</organismsDiffer>
    <experiments>3</experiments>
</comment>
<comment type="interaction">
    <interactant intactId="EBI-12003442">
        <id>Q8WVX3-2</id>
    </interactant>
    <interactant intactId="EBI-3923061">
        <id>Q96B21</id>
        <label>TMEM45B</label>
    </interactant>
    <organismsDiffer>false</organismsDiffer>
    <experiments>3</experiments>
</comment>
<comment type="interaction">
    <interactant intactId="EBI-12003442">
        <id>Q8WVX3-2</id>
    </interactant>
    <interactant intactId="EBI-726044">
        <id>Q9NW97</id>
        <label>TMEM51</label>
    </interactant>
    <organismsDiffer>false</organismsDiffer>
    <experiments>3</experiments>
</comment>
<comment type="interaction">
    <interactant intactId="EBI-12003442">
        <id>Q8WVX3-2</id>
    </interactant>
    <interactant intactId="EBI-2799703">
        <id>O95070</id>
        <label>YIF1A</label>
    </interactant>
    <organismsDiffer>false</organismsDiffer>
    <experiments>3</experiments>
</comment>
<comment type="subcellular location">
    <subcellularLocation>
        <location evidence="1">Endoplasmic reticulum membrane</location>
        <topology evidence="2">Single-pass membrane protein</topology>
    </subcellularLocation>
</comment>
<comment type="alternative products">
    <event type="alternative splicing"/>
    <isoform>
        <id>Q8WVX3-1</id>
        <name>1</name>
        <sequence type="displayed"/>
    </isoform>
    <isoform>
        <id>Q8WVX3-2</id>
        <name>2</name>
        <sequence type="described" ref="VSP_032405"/>
    </isoform>
</comment>
<dbReference type="EMBL" id="AY605045">
    <property type="protein sequence ID" value="AAT35812.1"/>
    <property type="molecule type" value="mRNA"/>
</dbReference>
<dbReference type="EMBL" id="AC092656">
    <property type="status" value="NOT_ANNOTATED_CDS"/>
    <property type="molecule type" value="Genomic_DNA"/>
</dbReference>
<dbReference type="EMBL" id="BC017399">
    <property type="protein sequence ID" value="AAH17399.1"/>
    <property type="molecule type" value="mRNA"/>
</dbReference>
<dbReference type="CCDS" id="CCDS43266.1">
    <molecule id="Q8WVX3-1"/>
</dbReference>
<dbReference type="CCDS" id="CCDS54798.1">
    <molecule id="Q8WVX3-2"/>
</dbReference>
<dbReference type="RefSeq" id="NP_001001701.2">
    <molecule id="Q8WVX3-1"/>
    <property type="nucleotide sequence ID" value="NM_001001701.4"/>
</dbReference>
<dbReference type="RefSeq" id="NP_001163801.1">
    <molecule id="Q8WVX3-2"/>
    <property type="nucleotide sequence ID" value="NM_001170330.1"/>
</dbReference>
<dbReference type="SMR" id="Q8WVX3"/>
<dbReference type="BioGRID" id="134952">
    <property type="interactions" value="96"/>
</dbReference>
<dbReference type="FunCoup" id="Q8WVX3">
    <property type="interactions" value="29"/>
</dbReference>
<dbReference type="IntAct" id="Q8WVX3">
    <property type="interactions" value="78"/>
</dbReference>
<dbReference type="MINT" id="Q8WVX3"/>
<dbReference type="STRING" id="9606.ENSP00000382026"/>
<dbReference type="TCDB" id="1.A.50.6.1">
    <property type="family name" value="the phospholamban (ca(2+)-channel and ca(2+)-atpase regulator) (plb) family"/>
</dbReference>
<dbReference type="GlyGen" id="Q8WVX3">
    <property type="glycosylation" value="1 site, 1 O-linked glycan (1 site)"/>
</dbReference>
<dbReference type="iPTMnet" id="Q8WVX3"/>
<dbReference type="PhosphoSitePlus" id="Q8WVX3"/>
<dbReference type="BioMuta" id="C4orf3"/>
<dbReference type="jPOST" id="Q8WVX3"/>
<dbReference type="MassIVE" id="Q8WVX3"/>
<dbReference type="PaxDb" id="9606-ENSP00000382026"/>
<dbReference type="PeptideAtlas" id="Q8WVX3"/>
<dbReference type="ProteomicsDB" id="74831">
    <molecule id="Q8WVX3-1"/>
</dbReference>
<dbReference type="ProteomicsDB" id="74832">
    <molecule id="Q8WVX3-2"/>
</dbReference>
<dbReference type="Pumba" id="Q8WVX3"/>
<dbReference type="TopDownProteomics" id="Q8WVX3-1">
    <molecule id="Q8WVX3-1"/>
</dbReference>
<dbReference type="Antibodypedia" id="26668">
    <property type="antibodies" value="85 antibodies from 14 providers"/>
</dbReference>
<dbReference type="DNASU" id="401152"/>
<dbReference type="Ensembl" id="ENST00000399075.6">
    <molecule id="Q8WVX3-2"/>
    <property type="protein sequence ID" value="ENSP00000382026.4"/>
    <property type="gene ID" value="ENSG00000164096.13"/>
</dbReference>
<dbReference type="Ensembl" id="ENST00000504110.2">
    <molecule id="Q8WVX3-1"/>
    <property type="protein sequence ID" value="ENSP00000485697.1"/>
    <property type="gene ID" value="ENSG00000164096.13"/>
</dbReference>
<dbReference type="GeneID" id="401152"/>
<dbReference type="KEGG" id="hsa:401152"/>
<dbReference type="MANE-Select" id="ENST00000504110.2">
    <property type="protein sequence ID" value="ENSP00000485697.1"/>
    <property type="RefSeq nucleotide sequence ID" value="NM_001001701.4"/>
    <property type="RefSeq protein sequence ID" value="NP_001001701.2"/>
</dbReference>
<dbReference type="UCSC" id="uc003icv.5">
    <molecule id="Q8WVX3-1"/>
    <property type="organism name" value="human"/>
</dbReference>
<dbReference type="AGR" id="HGNC:19225"/>
<dbReference type="CTD" id="401152"/>
<dbReference type="DisGeNET" id="401152"/>
<dbReference type="GeneCards" id="ARLN"/>
<dbReference type="HGNC" id="HGNC:19225">
    <property type="gene designation" value="ARLN"/>
</dbReference>
<dbReference type="HPA" id="ENSG00000164096">
    <property type="expression patterns" value="Low tissue specificity"/>
</dbReference>
<dbReference type="MIM" id="620530">
    <property type="type" value="gene"/>
</dbReference>
<dbReference type="neXtProt" id="NX_Q8WVX3"/>
<dbReference type="OpenTargets" id="ENSG00000164096"/>
<dbReference type="PharmGKB" id="PA164717306"/>
<dbReference type="VEuPathDB" id="HostDB:ENSG00000164096"/>
<dbReference type="eggNOG" id="ENOG502T0GP">
    <property type="taxonomic scope" value="Eukaryota"/>
</dbReference>
<dbReference type="GeneTree" id="ENSGT00530000064570"/>
<dbReference type="HOGENOM" id="CLU_135965_0_0_1"/>
<dbReference type="InParanoid" id="Q8WVX3"/>
<dbReference type="OMA" id="DRFPKHS"/>
<dbReference type="OrthoDB" id="9633459at2759"/>
<dbReference type="PAN-GO" id="Q8WVX3">
    <property type="GO annotations" value="0 GO annotations based on evolutionary models"/>
</dbReference>
<dbReference type="PhylomeDB" id="Q8WVX3"/>
<dbReference type="TreeFam" id="TF343305"/>
<dbReference type="PathwayCommons" id="Q8WVX3"/>
<dbReference type="SignaLink" id="Q8WVX3"/>
<dbReference type="BioGRID-ORCS" id="401152">
    <property type="hits" value="7 hits in 1146 CRISPR screens"/>
</dbReference>
<dbReference type="ChiTaRS" id="C4orf3">
    <property type="organism name" value="human"/>
</dbReference>
<dbReference type="GenomeRNAi" id="401152"/>
<dbReference type="Pharos" id="Q8WVX3">
    <property type="development level" value="Tbio"/>
</dbReference>
<dbReference type="PRO" id="PR:Q8WVX3"/>
<dbReference type="Proteomes" id="UP000005640">
    <property type="component" value="Chromosome 4"/>
</dbReference>
<dbReference type="RNAct" id="Q8WVX3">
    <property type="molecule type" value="protein"/>
</dbReference>
<dbReference type="Bgee" id="ENSG00000164096">
    <property type="expression patterns" value="Expressed in endothelial cell and 198 other cell types or tissues"/>
</dbReference>
<dbReference type="GO" id="GO:0005789">
    <property type="term" value="C:endoplasmic reticulum membrane"/>
    <property type="evidence" value="ECO:0007669"/>
    <property type="project" value="UniProtKB-SubCell"/>
</dbReference>
<dbReference type="InterPro" id="IPR038780">
    <property type="entry name" value="ALN"/>
</dbReference>
<dbReference type="PANTHER" id="PTHR37367">
    <property type="entry name" value="CHROMOSOME 4 OPEN READING FRAME 3"/>
    <property type="match status" value="1"/>
</dbReference>
<dbReference type="PANTHER" id="PTHR37367:SF1">
    <property type="entry name" value="CHROMOSOME 4 OPEN READING FRAME 3"/>
    <property type="match status" value="1"/>
</dbReference>
<dbReference type="Pfam" id="PF17696">
    <property type="entry name" value="ALN"/>
    <property type="match status" value="1"/>
</dbReference>
<protein>
    <recommendedName>
        <fullName evidence="7">Sarcoplasmic/endoplasmic reticulum calcium ATPase regulator ARLN</fullName>
        <shortName evidence="7">SERCA regulator ARLN</shortName>
    </recommendedName>
    <alternativeName>
        <fullName evidence="8">Allregulin</fullName>
    </alternativeName>
    <alternativeName>
        <fullName evidence="1">Another-regulin</fullName>
        <shortName evidence="1">ALN</shortName>
    </alternativeName>
    <alternativeName>
        <fullName>Hepatitis C virus F protein-transactivated protein 1</fullName>
        <shortName>HCV F-transactivated protein 1</shortName>
    </alternativeName>
</protein>
<evidence type="ECO:0000250" key="1">
    <source>
        <dbReference type="UniProtKB" id="Q99M08"/>
    </source>
</evidence>
<evidence type="ECO:0000255" key="2"/>
<evidence type="ECO:0000256" key="3">
    <source>
        <dbReference type="SAM" id="MobiDB-lite"/>
    </source>
</evidence>
<evidence type="ECO:0000269" key="4">
    <source>
    </source>
</evidence>
<evidence type="ECO:0000269" key="5">
    <source>
    </source>
</evidence>
<evidence type="ECO:0000303" key="6">
    <source>
    </source>
</evidence>
<evidence type="ECO:0000305" key="7"/>
<evidence type="ECO:0000312" key="8">
    <source>
        <dbReference type="HGNC" id="HGNC:19225"/>
    </source>
</evidence>
<evidence type="ECO:0007744" key="9">
    <source>
    </source>
</evidence>
<name>SRALN_HUMAN</name>
<gene>
    <name evidence="8" type="primary">ARLN</name>
    <name type="synonym">C4orf3</name>
</gene>